<sequence length="617" mass="67324">MGKIIGIDLGTTNSCVAVLEGGEPTVIPNAEGNRTTPSVVAYTKKGERIVGEPAKRQAITNPDQTIRSIKRHMGTDHKVTLNDKEYTPQEISAMILQKLKRDAEEYLGEEVNEAVITVPAYFTDSQRQATKDAGRIAGLEVKRIINEPTAAALAYGLDKEGDKTILVFDLGGGTFDVSLLEIGDGVFEVVATSGNNHLGGDDFDKRIIDYLAENFKKEYGVDLRDDRMALQRLKDAAEKAKKELSSVKTTNINLPFITQTEDGPKHLDIDLTRAKFNELTEDLVEKTMGPTRQALKDAGLEPGDIDEVILVGGSTRIPAVQEAVKDFIGKAPHKGINPDEVVAMGAAIQAGVLAGDVDDIVLLDVTPLSLGIETLGGVFTKLIERNTTIPTSKKKVFTTAADNQTSVDIHVLQGERKLAKDNVTLGRFQLTGIPPAPRGVPQIEVKFDIDANGIVHVSAKDLGTGKKQQITIKSSSGLSEDEIEKMVNDARKHEEEDKKRLEEIEARNEADSLVYQTEKTLKESGDKVSKDVKDKVEKAKDELKKALEGDDVDQIKEKTEALKNELTELSSQLYAQAQQQAQQQAQGQQGAQTDNQTGQNDGKTIDVDYEEVDDDDK</sequence>
<protein>
    <recommendedName>
        <fullName evidence="1">Chaperone protein DnaK</fullName>
    </recommendedName>
    <alternativeName>
        <fullName evidence="1">HSP70</fullName>
    </alternativeName>
    <alternativeName>
        <fullName evidence="1">Heat shock 70 kDa protein</fullName>
    </alternativeName>
    <alternativeName>
        <fullName evidence="1">Heat shock protein 70</fullName>
    </alternativeName>
</protein>
<dbReference type="EMBL" id="CP001098">
    <property type="protein sequence ID" value="ACL70030.1"/>
    <property type="molecule type" value="Genomic_DNA"/>
</dbReference>
<dbReference type="RefSeq" id="WP_012636214.1">
    <property type="nucleotide sequence ID" value="NC_011899.1"/>
</dbReference>
<dbReference type="SMR" id="B8CXL1"/>
<dbReference type="STRING" id="373903.Hore_12800"/>
<dbReference type="KEGG" id="hor:Hore_12800"/>
<dbReference type="eggNOG" id="COG0443">
    <property type="taxonomic scope" value="Bacteria"/>
</dbReference>
<dbReference type="HOGENOM" id="CLU_005965_2_1_9"/>
<dbReference type="OrthoDB" id="9766019at2"/>
<dbReference type="Proteomes" id="UP000000719">
    <property type="component" value="Chromosome"/>
</dbReference>
<dbReference type="GO" id="GO:0005524">
    <property type="term" value="F:ATP binding"/>
    <property type="evidence" value="ECO:0007669"/>
    <property type="project" value="UniProtKB-UniRule"/>
</dbReference>
<dbReference type="GO" id="GO:0140662">
    <property type="term" value="F:ATP-dependent protein folding chaperone"/>
    <property type="evidence" value="ECO:0007669"/>
    <property type="project" value="InterPro"/>
</dbReference>
<dbReference type="GO" id="GO:0051082">
    <property type="term" value="F:unfolded protein binding"/>
    <property type="evidence" value="ECO:0007669"/>
    <property type="project" value="InterPro"/>
</dbReference>
<dbReference type="CDD" id="cd10234">
    <property type="entry name" value="ASKHA_NBD_HSP70_DnaK-like"/>
    <property type="match status" value="1"/>
</dbReference>
<dbReference type="FunFam" id="2.60.34.10:FF:000014">
    <property type="entry name" value="Chaperone protein DnaK HSP70"/>
    <property type="match status" value="1"/>
</dbReference>
<dbReference type="FunFam" id="1.20.1270.10:FF:000001">
    <property type="entry name" value="Molecular chaperone DnaK"/>
    <property type="match status" value="1"/>
</dbReference>
<dbReference type="FunFam" id="3.30.420.40:FF:000071">
    <property type="entry name" value="Molecular chaperone DnaK"/>
    <property type="match status" value="1"/>
</dbReference>
<dbReference type="FunFam" id="3.90.640.10:FF:000003">
    <property type="entry name" value="Molecular chaperone DnaK"/>
    <property type="match status" value="1"/>
</dbReference>
<dbReference type="Gene3D" id="1.20.1270.10">
    <property type="match status" value="1"/>
</dbReference>
<dbReference type="Gene3D" id="3.30.420.40">
    <property type="match status" value="2"/>
</dbReference>
<dbReference type="Gene3D" id="3.90.640.10">
    <property type="entry name" value="Actin, Chain A, domain 4"/>
    <property type="match status" value="1"/>
</dbReference>
<dbReference type="Gene3D" id="2.60.34.10">
    <property type="entry name" value="Substrate Binding Domain Of DNAk, Chain A, domain 1"/>
    <property type="match status" value="1"/>
</dbReference>
<dbReference type="HAMAP" id="MF_00332">
    <property type="entry name" value="DnaK"/>
    <property type="match status" value="1"/>
</dbReference>
<dbReference type="InterPro" id="IPR043129">
    <property type="entry name" value="ATPase_NBD"/>
</dbReference>
<dbReference type="InterPro" id="IPR012725">
    <property type="entry name" value="Chaperone_DnaK"/>
</dbReference>
<dbReference type="InterPro" id="IPR018181">
    <property type="entry name" value="Heat_shock_70_CS"/>
</dbReference>
<dbReference type="InterPro" id="IPR029048">
    <property type="entry name" value="HSP70_C_sf"/>
</dbReference>
<dbReference type="InterPro" id="IPR029047">
    <property type="entry name" value="HSP70_peptide-bd_sf"/>
</dbReference>
<dbReference type="InterPro" id="IPR013126">
    <property type="entry name" value="Hsp_70_fam"/>
</dbReference>
<dbReference type="NCBIfam" id="NF001413">
    <property type="entry name" value="PRK00290.1"/>
    <property type="match status" value="1"/>
</dbReference>
<dbReference type="NCBIfam" id="TIGR02350">
    <property type="entry name" value="prok_dnaK"/>
    <property type="match status" value="1"/>
</dbReference>
<dbReference type="PANTHER" id="PTHR19375">
    <property type="entry name" value="HEAT SHOCK PROTEIN 70KDA"/>
    <property type="match status" value="1"/>
</dbReference>
<dbReference type="Pfam" id="PF00012">
    <property type="entry name" value="HSP70"/>
    <property type="match status" value="1"/>
</dbReference>
<dbReference type="PRINTS" id="PR00301">
    <property type="entry name" value="HEATSHOCK70"/>
</dbReference>
<dbReference type="SUPFAM" id="SSF53067">
    <property type="entry name" value="Actin-like ATPase domain"/>
    <property type="match status" value="2"/>
</dbReference>
<dbReference type="SUPFAM" id="SSF100934">
    <property type="entry name" value="Heat shock protein 70kD (HSP70), C-terminal subdomain"/>
    <property type="match status" value="1"/>
</dbReference>
<dbReference type="SUPFAM" id="SSF100920">
    <property type="entry name" value="Heat shock protein 70kD (HSP70), peptide-binding domain"/>
    <property type="match status" value="1"/>
</dbReference>
<dbReference type="PROSITE" id="PS00297">
    <property type="entry name" value="HSP70_1"/>
    <property type="match status" value="1"/>
</dbReference>
<dbReference type="PROSITE" id="PS00329">
    <property type="entry name" value="HSP70_2"/>
    <property type="match status" value="1"/>
</dbReference>
<dbReference type="PROSITE" id="PS01036">
    <property type="entry name" value="HSP70_3"/>
    <property type="match status" value="1"/>
</dbReference>
<accession>B8CXL1</accession>
<organism>
    <name type="scientific">Halothermothrix orenii (strain H 168 / OCM 544 / DSM 9562)</name>
    <dbReference type="NCBI Taxonomy" id="373903"/>
    <lineage>
        <taxon>Bacteria</taxon>
        <taxon>Bacillati</taxon>
        <taxon>Bacillota</taxon>
        <taxon>Clostridia</taxon>
        <taxon>Halanaerobiales</taxon>
        <taxon>Halothermotrichaceae</taxon>
        <taxon>Halothermothrix</taxon>
    </lineage>
</organism>
<evidence type="ECO:0000255" key="1">
    <source>
        <dbReference type="HAMAP-Rule" id="MF_00332"/>
    </source>
</evidence>
<evidence type="ECO:0000256" key="2">
    <source>
        <dbReference type="SAM" id="MobiDB-lite"/>
    </source>
</evidence>
<feature type="chain" id="PRO_1000133148" description="Chaperone protein DnaK">
    <location>
        <begin position="1"/>
        <end position="617"/>
    </location>
</feature>
<feature type="region of interest" description="Disordered" evidence="2">
    <location>
        <begin position="575"/>
        <end position="617"/>
    </location>
</feature>
<feature type="compositionally biased region" description="Low complexity" evidence="2">
    <location>
        <begin position="575"/>
        <end position="592"/>
    </location>
</feature>
<feature type="compositionally biased region" description="Polar residues" evidence="2">
    <location>
        <begin position="593"/>
        <end position="602"/>
    </location>
</feature>
<feature type="compositionally biased region" description="Acidic residues" evidence="2">
    <location>
        <begin position="607"/>
        <end position="617"/>
    </location>
</feature>
<feature type="modified residue" description="Phosphothreonine; by autocatalysis" evidence="1">
    <location>
        <position position="174"/>
    </location>
</feature>
<comment type="function">
    <text evidence="1">Acts as a chaperone.</text>
</comment>
<comment type="induction">
    <text evidence="1">By stress conditions e.g. heat shock.</text>
</comment>
<comment type="similarity">
    <text evidence="1">Belongs to the heat shock protein 70 family.</text>
</comment>
<keyword id="KW-0067">ATP-binding</keyword>
<keyword id="KW-0143">Chaperone</keyword>
<keyword id="KW-0547">Nucleotide-binding</keyword>
<keyword id="KW-0597">Phosphoprotein</keyword>
<keyword id="KW-1185">Reference proteome</keyword>
<keyword id="KW-0346">Stress response</keyword>
<gene>
    <name evidence="1" type="primary">dnaK</name>
    <name type="ordered locus">Hore_12800</name>
</gene>
<name>DNAK_HALOH</name>
<proteinExistence type="inferred from homology"/>
<reference key="1">
    <citation type="journal article" date="2009" name="PLoS ONE">
        <title>Genome analysis of the anaerobic thermohalophilic bacterium Halothermothrix orenii.</title>
        <authorList>
            <person name="Mavromatis K."/>
            <person name="Ivanova N."/>
            <person name="Anderson I."/>
            <person name="Lykidis A."/>
            <person name="Hooper S.D."/>
            <person name="Sun H."/>
            <person name="Kunin V."/>
            <person name="Lapidus A."/>
            <person name="Hugenholtz P."/>
            <person name="Patel B."/>
            <person name="Kyrpides N.C."/>
        </authorList>
    </citation>
    <scope>NUCLEOTIDE SEQUENCE [LARGE SCALE GENOMIC DNA]</scope>
    <source>
        <strain>H 168 / OCM 544 / DSM 9562</strain>
    </source>
</reference>